<name>RUVA_HALOH</name>
<sequence length="194" mass="21392">MIGYLKGNVIWKAENKVILETGGVGYRVLVPSTVRLKPVGEKLELFVYTYVREDSLDLYGFKTMEERELFETLLSVSGIGPRAAINILSSLSYKKFIEAILTEKVSILKQVSGIGPKTAKRLILELKGKLKDMSGDFEEPLPDNRNTELSDALASLGYSELEIEEALSNADIKNNGSLEENIKKALGYLGSKGS</sequence>
<evidence type="ECO:0000255" key="1">
    <source>
        <dbReference type="HAMAP-Rule" id="MF_00031"/>
    </source>
</evidence>
<comment type="function">
    <text evidence="1">The RuvA-RuvB-RuvC complex processes Holliday junction (HJ) DNA during genetic recombination and DNA repair, while the RuvA-RuvB complex plays an important role in the rescue of blocked DNA replication forks via replication fork reversal (RFR). RuvA specifically binds to HJ cruciform DNA, conferring on it an open structure. The RuvB hexamer acts as an ATP-dependent pump, pulling dsDNA into and through the RuvAB complex. HJ branch migration allows RuvC to scan DNA until it finds its consensus sequence, where it cleaves and resolves the cruciform DNA.</text>
</comment>
<comment type="subunit">
    <text evidence="1">Homotetramer. Forms an RuvA(8)-RuvB(12)-Holliday junction (HJ) complex. HJ DNA is sandwiched between 2 RuvA tetramers; dsDNA enters through RuvA and exits via RuvB. An RuvB hexamer assembles on each DNA strand where it exits the tetramer. Each RuvB hexamer is contacted by two RuvA subunits (via domain III) on 2 adjacent RuvB subunits; this complex drives branch migration. In the full resolvosome a probable DNA-RuvA(4)-RuvB(12)-RuvC(2) complex forms which resolves the HJ.</text>
</comment>
<comment type="subcellular location">
    <subcellularLocation>
        <location evidence="1">Cytoplasm</location>
    </subcellularLocation>
</comment>
<comment type="domain">
    <text evidence="1">Has three domains with a flexible linker between the domains II and III and assumes an 'L' shape. Domain III is highly mobile and contacts RuvB.</text>
</comment>
<comment type="similarity">
    <text evidence="1">Belongs to the RuvA family.</text>
</comment>
<proteinExistence type="inferred from homology"/>
<dbReference type="EMBL" id="CP001098">
    <property type="protein sequence ID" value="ACL69982.1"/>
    <property type="molecule type" value="Genomic_DNA"/>
</dbReference>
<dbReference type="RefSeq" id="WP_012636166.1">
    <property type="nucleotide sequence ID" value="NC_011899.1"/>
</dbReference>
<dbReference type="SMR" id="B8CXG3"/>
<dbReference type="STRING" id="373903.Hore_12320"/>
<dbReference type="KEGG" id="hor:Hore_12320"/>
<dbReference type="eggNOG" id="COG0632">
    <property type="taxonomic scope" value="Bacteria"/>
</dbReference>
<dbReference type="HOGENOM" id="CLU_087936_2_1_9"/>
<dbReference type="Proteomes" id="UP000000719">
    <property type="component" value="Chromosome"/>
</dbReference>
<dbReference type="GO" id="GO:0005737">
    <property type="term" value="C:cytoplasm"/>
    <property type="evidence" value="ECO:0007669"/>
    <property type="project" value="UniProtKB-SubCell"/>
</dbReference>
<dbReference type="GO" id="GO:0009379">
    <property type="term" value="C:Holliday junction helicase complex"/>
    <property type="evidence" value="ECO:0007669"/>
    <property type="project" value="InterPro"/>
</dbReference>
<dbReference type="GO" id="GO:0048476">
    <property type="term" value="C:Holliday junction resolvase complex"/>
    <property type="evidence" value="ECO:0007669"/>
    <property type="project" value="UniProtKB-UniRule"/>
</dbReference>
<dbReference type="GO" id="GO:0005524">
    <property type="term" value="F:ATP binding"/>
    <property type="evidence" value="ECO:0007669"/>
    <property type="project" value="InterPro"/>
</dbReference>
<dbReference type="GO" id="GO:0000400">
    <property type="term" value="F:four-way junction DNA binding"/>
    <property type="evidence" value="ECO:0007669"/>
    <property type="project" value="UniProtKB-UniRule"/>
</dbReference>
<dbReference type="GO" id="GO:0009378">
    <property type="term" value="F:four-way junction helicase activity"/>
    <property type="evidence" value="ECO:0007669"/>
    <property type="project" value="InterPro"/>
</dbReference>
<dbReference type="GO" id="GO:0006310">
    <property type="term" value="P:DNA recombination"/>
    <property type="evidence" value="ECO:0007669"/>
    <property type="project" value="UniProtKB-UniRule"/>
</dbReference>
<dbReference type="GO" id="GO:0006281">
    <property type="term" value="P:DNA repair"/>
    <property type="evidence" value="ECO:0007669"/>
    <property type="project" value="UniProtKB-UniRule"/>
</dbReference>
<dbReference type="CDD" id="cd14332">
    <property type="entry name" value="UBA_RuvA_C"/>
    <property type="match status" value="1"/>
</dbReference>
<dbReference type="Gene3D" id="1.10.150.20">
    <property type="entry name" value="5' to 3' exonuclease, C-terminal subdomain"/>
    <property type="match status" value="1"/>
</dbReference>
<dbReference type="Gene3D" id="2.40.50.140">
    <property type="entry name" value="Nucleic acid-binding proteins"/>
    <property type="match status" value="1"/>
</dbReference>
<dbReference type="HAMAP" id="MF_00031">
    <property type="entry name" value="DNA_HJ_migration_RuvA"/>
    <property type="match status" value="1"/>
</dbReference>
<dbReference type="InterPro" id="IPR013849">
    <property type="entry name" value="DNA_helicase_Holl-junc_RuvA_I"/>
</dbReference>
<dbReference type="InterPro" id="IPR003583">
    <property type="entry name" value="Hlx-hairpin-Hlx_DNA-bd_motif"/>
</dbReference>
<dbReference type="InterPro" id="IPR012340">
    <property type="entry name" value="NA-bd_OB-fold"/>
</dbReference>
<dbReference type="InterPro" id="IPR000085">
    <property type="entry name" value="RuvA"/>
</dbReference>
<dbReference type="InterPro" id="IPR010994">
    <property type="entry name" value="RuvA_2-like"/>
</dbReference>
<dbReference type="InterPro" id="IPR011114">
    <property type="entry name" value="RuvA_C"/>
</dbReference>
<dbReference type="InterPro" id="IPR036267">
    <property type="entry name" value="RuvA_C_sf"/>
</dbReference>
<dbReference type="NCBIfam" id="TIGR00084">
    <property type="entry name" value="ruvA"/>
    <property type="match status" value="1"/>
</dbReference>
<dbReference type="Pfam" id="PF14520">
    <property type="entry name" value="HHH_5"/>
    <property type="match status" value="1"/>
</dbReference>
<dbReference type="Pfam" id="PF07499">
    <property type="entry name" value="RuvA_C"/>
    <property type="match status" value="1"/>
</dbReference>
<dbReference type="Pfam" id="PF01330">
    <property type="entry name" value="RuvA_N"/>
    <property type="match status" value="1"/>
</dbReference>
<dbReference type="SMART" id="SM00278">
    <property type="entry name" value="HhH1"/>
    <property type="match status" value="2"/>
</dbReference>
<dbReference type="SUPFAM" id="SSF46929">
    <property type="entry name" value="DNA helicase RuvA subunit, C-terminal domain"/>
    <property type="match status" value="1"/>
</dbReference>
<dbReference type="SUPFAM" id="SSF50249">
    <property type="entry name" value="Nucleic acid-binding proteins"/>
    <property type="match status" value="1"/>
</dbReference>
<dbReference type="SUPFAM" id="SSF47781">
    <property type="entry name" value="RuvA domain 2-like"/>
    <property type="match status" value="1"/>
</dbReference>
<accession>B8CXG3</accession>
<protein>
    <recommendedName>
        <fullName evidence="1">Holliday junction branch migration complex subunit RuvA</fullName>
    </recommendedName>
</protein>
<organism>
    <name type="scientific">Halothermothrix orenii (strain H 168 / OCM 544 / DSM 9562)</name>
    <dbReference type="NCBI Taxonomy" id="373903"/>
    <lineage>
        <taxon>Bacteria</taxon>
        <taxon>Bacillati</taxon>
        <taxon>Bacillota</taxon>
        <taxon>Clostridia</taxon>
        <taxon>Halanaerobiales</taxon>
        <taxon>Halothermotrichaceae</taxon>
        <taxon>Halothermothrix</taxon>
    </lineage>
</organism>
<keyword id="KW-0963">Cytoplasm</keyword>
<keyword id="KW-0227">DNA damage</keyword>
<keyword id="KW-0233">DNA recombination</keyword>
<keyword id="KW-0234">DNA repair</keyword>
<keyword id="KW-0238">DNA-binding</keyword>
<keyword id="KW-1185">Reference proteome</keyword>
<reference key="1">
    <citation type="journal article" date="2009" name="PLoS ONE">
        <title>Genome analysis of the anaerobic thermohalophilic bacterium Halothermothrix orenii.</title>
        <authorList>
            <person name="Mavromatis K."/>
            <person name="Ivanova N."/>
            <person name="Anderson I."/>
            <person name="Lykidis A."/>
            <person name="Hooper S.D."/>
            <person name="Sun H."/>
            <person name="Kunin V."/>
            <person name="Lapidus A."/>
            <person name="Hugenholtz P."/>
            <person name="Patel B."/>
            <person name="Kyrpides N.C."/>
        </authorList>
    </citation>
    <scope>NUCLEOTIDE SEQUENCE [LARGE SCALE GENOMIC DNA]</scope>
    <source>
        <strain>H 168 / OCM 544 / DSM 9562</strain>
    </source>
</reference>
<feature type="chain" id="PRO_1000195149" description="Holliday junction branch migration complex subunit RuvA">
    <location>
        <begin position="1"/>
        <end position="194"/>
    </location>
</feature>
<feature type="region of interest" description="Domain I" evidence="1">
    <location>
        <begin position="1"/>
        <end position="62"/>
    </location>
</feature>
<feature type="region of interest" description="Domain II" evidence="1">
    <location>
        <begin position="63"/>
        <end position="136"/>
    </location>
</feature>
<feature type="region of interest" description="Flexible linker" evidence="1">
    <location>
        <begin position="136"/>
        <end position="140"/>
    </location>
</feature>
<feature type="region of interest" description="Domain III" evidence="1">
    <location>
        <begin position="141"/>
        <end position="194"/>
    </location>
</feature>
<gene>
    <name evidence="1" type="primary">ruvA</name>
    <name type="ordered locus">Hore_12320</name>
</gene>